<reference key="1">
    <citation type="submission" date="2006-05" db="EMBL/GenBank/DDBJ databases">
        <title>Complete sequence of chromosome of Silicibacter sp. TM1040.</title>
        <authorList>
            <consortium name="US DOE Joint Genome Institute"/>
            <person name="Copeland A."/>
            <person name="Lucas S."/>
            <person name="Lapidus A."/>
            <person name="Barry K."/>
            <person name="Detter J.C."/>
            <person name="Glavina del Rio T."/>
            <person name="Hammon N."/>
            <person name="Israni S."/>
            <person name="Dalin E."/>
            <person name="Tice H."/>
            <person name="Pitluck S."/>
            <person name="Brettin T."/>
            <person name="Bruce D."/>
            <person name="Han C."/>
            <person name="Tapia R."/>
            <person name="Goodwin L."/>
            <person name="Thompson L.S."/>
            <person name="Gilna P."/>
            <person name="Schmutz J."/>
            <person name="Larimer F."/>
            <person name="Land M."/>
            <person name="Hauser L."/>
            <person name="Kyrpides N."/>
            <person name="Kim E."/>
            <person name="Belas R."/>
            <person name="Moran M.A."/>
            <person name="Buchan A."/>
            <person name="Gonzalez J.M."/>
            <person name="Schell M.A."/>
            <person name="Sun F."/>
            <person name="Richardson P."/>
        </authorList>
    </citation>
    <scope>NUCLEOTIDE SEQUENCE [LARGE SCALE GENOMIC DNA]</scope>
    <source>
        <strain>TM1040</strain>
    </source>
</reference>
<accession>Q1GEZ2</accession>
<proteinExistence type="inferred from homology"/>
<comment type="catalytic activity">
    <reaction evidence="1">
        <text>1-(5-phospho-beta-D-ribosyl)-ATP + H2O = 1-(5-phospho-beta-D-ribosyl)-5'-AMP + diphosphate + H(+)</text>
        <dbReference type="Rhea" id="RHEA:22828"/>
        <dbReference type="ChEBI" id="CHEBI:15377"/>
        <dbReference type="ChEBI" id="CHEBI:15378"/>
        <dbReference type="ChEBI" id="CHEBI:33019"/>
        <dbReference type="ChEBI" id="CHEBI:59457"/>
        <dbReference type="ChEBI" id="CHEBI:73183"/>
        <dbReference type="EC" id="3.6.1.31"/>
    </reaction>
</comment>
<comment type="pathway">
    <text evidence="1">Amino-acid biosynthesis; L-histidine biosynthesis; L-histidine from 5-phospho-alpha-D-ribose 1-diphosphate: step 2/9.</text>
</comment>
<comment type="subcellular location">
    <subcellularLocation>
        <location evidence="1">Cytoplasm</location>
    </subcellularLocation>
</comment>
<comment type="similarity">
    <text evidence="1">Belongs to the PRA-PH family.</text>
</comment>
<organism>
    <name type="scientific">Ruegeria sp. (strain TM1040)</name>
    <name type="common">Silicibacter sp.</name>
    <dbReference type="NCBI Taxonomy" id="292414"/>
    <lineage>
        <taxon>Bacteria</taxon>
        <taxon>Pseudomonadati</taxon>
        <taxon>Pseudomonadota</taxon>
        <taxon>Alphaproteobacteria</taxon>
        <taxon>Rhodobacterales</taxon>
        <taxon>Roseobacteraceae</taxon>
        <taxon>Ruegeria</taxon>
    </lineage>
</organism>
<sequence>MTLLHDLEQTILSRKGTDPDTSWTAKLLSKGPEKCAEKFGEEAIEAIIEAVKDDKAKLASEGADVLYHFLVMLAARDVALDDVLTVLAERQGLSGLAEKAARPKG</sequence>
<name>HIS2_RUEST</name>
<dbReference type="EC" id="3.6.1.31" evidence="1"/>
<dbReference type="EMBL" id="CP000377">
    <property type="protein sequence ID" value="ABF64774.1"/>
    <property type="molecule type" value="Genomic_DNA"/>
</dbReference>
<dbReference type="RefSeq" id="WP_011539366.1">
    <property type="nucleotide sequence ID" value="NC_008044.1"/>
</dbReference>
<dbReference type="SMR" id="Q1GEZ2"/>
<dbReference type="STRING" id="292414.TM1040_2042"/>
<dbReference type="KEGG" id="sit:TM1040_2042"/>
<dbReference type="eggNOG" id="COG0140">
    <property type="taxonomic scope" value="Bacteria"/>
</dbReference>
<dbReference type="HOGENOM" id="CLU_123337_1_1_5"/>
<dbReference type="OrthoDB" id="9814738at2"/>
<dbReference type="UniPathway" id="UPA00031">
    <property type="reaction ID" value="UER00007"/>
</dbReference>
<dbReference type="Proteomes" id="UP000000636">
    <property type="component" value="Chromosome"/>
</dbReference>
<dbReference type="GO" id="GO:0005737">
    <property type="term" value="C:cytoplasm"/>
    <property type="evidence" value="ECO:0007669"/>
    <property type="project" value="UniProtKB-SubCell"/>
</dbReference>
<dbReference type="GO" id="GO:0005524">
    <property type="term" value="F:ATP binding"/>
    <property type="evidence" value="ECO:0007669"/>
    <property type="project" value="UniProtKB-KW"/>
</dbReference>
<dbReference type="GO" id="GO:0004636">
    <property type="term" value="F:phosphoribosyl-ATP diphosphatase activity"/>
    <property type="evidence" value="ECO:0007669"/>
    <property type="project" value="UniProtKB-UniRule"/>
</dbReference>
<dbReference type="GO" id="GO:0000105">
    <property type="term" value="P:L-histidine biosynthetic process"/>
    <property type="evidence" value="ECO:0007669"/>
    <property type="project" value="UniProtKB-UniRule"/>
</dbReference>
<dbReference type="CDD" id="cd11534">
    <property type="entry name" value="NTP-PPase_HisIE_like"/>
    <property type="match status" value="1"/>
</dbReference>
<dbReference type="Gene3D" id="1.10.287.1080">
    <property type="entry name" value="MazG-like"/>
    <property type="match status" value="1"/>
</dbReference>
<dbReference type="HAMAP" id="MF_01020">
    <property type="entry name" value="HisE"/>
    <property type="match status" value="1"/>
</dbReference>
<dbReference type="InterPro" id="IPR008179">
    <property type="entry name" value="HisE"/>
</dbReference>
<dbReference type="InterPro" id="IPR021130">
    <property type="entry name" value="PRib-ATP_PPHydrolase-like"/>
</dbReference>
<dbReference type="NCBIfam" id="TIGR03188">
    <property type="entry name" value="histidine_hisI"/>
    <property type="match status" value="1"/>
</dbReference>
<dbReference type="NCBIfam" id="NF001611">
    <property type="entry name" value="PRK00400.1-3"/>
    <property type="match status" value="1"/>
</dbReference>
<dbReference type="NCBIfam" id="NF001613">
    <property type="entry name" value="PRK00400.1-5"/>
    <property type="match status" value="1"/>
</dbReference>
<dbReference type="PANTHER" id="PTHR42945">
    <property type="entry name" value="HISTIDINE BIOSYNTHESIS BIFUNCTIONAL PROTEIN"/>
    <property type="match status" value="1"/>
</dbReference>
<dbReference type="PANTHER" id="PTHR42945:SF1">
    <property type="entry name" value="HISTIDINE BIOSYNTHESIS BIFUNCTIONAL PROTEIN HIS7"/>
    <property type="match status" value="1"/>
</dbReference>
<dbReference type="Pfam" id="PF01503">
    <property type="entry name" value="PRA-PH"/>
    <property type="match status" value="1"/>
</dbReference>
<dbReference type="SUPFAM" id="SSF101386">
    <property type="entry name" value="all-alpha NTP pyrophosphatases"/>
    <property type="match status" value="1"/>
</dbReference>
<keyword id="KW-0028">Amino-acid biosynthesis</keyword>
<keyword id="KW-0067">ATP-binding</keyword>
<keyword id="KW-0963">Cytoplasm</keyword>
<keyword id="KW-0368">Histidine biosynthesis</keyword>
<keyword id="KW-0378">Hydrolase</keyword>
<keyword id="KW-0547">Nucleotide-binding</keyword>
<keyword id="KW-1185">Reference proteome</keyword>
<gene>
    <name evidence="1" type="primary">hisE</name>
    <name type="ordered locus">TM1040_2042</name>
</gene>
<evidence type="ECO:0000255" key="1">
    <source>
        <dbReference type="HAMAP-Rule" id="MF_01020"/>
    </source>
</evidence>
<protein>
    <recommendedName>
        <fullName evidence="1">Phosphoribosyl-ATP pyrophosphatase</fullName>
        <shortName evidence="1">PRA-PH</shortName>
        <ecNumber evidence="1">3.6.1.31</ecNumber>
    </recommendedName>
</protein>
<feature type="chain" id="PRO_1000063383" description="Phosphoribosyl-ATP pyrophosphatase">
    <location>
        <begin position="1"/>
        <end position="105"/>
    </location>
</feature>